<keyword id="KW-0032">Aminotransferase</keyword>
<keyword id="KW-0663">Pyridoxal phosphate</keyword>
<keyword id="KW-1185">Reference proteome</keyword>
<keyword id="KW-0808">Transferase</keyword>
<feature type="chain" id="PRO_0000379544" description="Putrescine aminotransferase">
    <location>
        <begin position="1"/>
        <end position="459"/>
    </location>
</feature>
<feature type="binding site" description="in other chain" evidence="1">
    <location>
        <begin position="150"/>
        <end position="151"/>
    </location>
    <ligand>
        <name>pyridoxal 5'-phosphate</name>
        <dbReference type="ChEBI" id="CHEBI:597326"/>
        <note>ligand shared between dimeric partners</note>
    </ligand>
</feature>
<feature type="binding site" description="in other chain" evidence="1">
    <location>
        <position position="274"/>
    </location>
    <ligand>
        <name>pyridoxal 5'-phosphate</name>
        <dbReference type="ChEBI" id="CHEBI:597326"/>
        <note>ligand shared between dimeric partners</note>
    </ligand>
</feature>
<feature type="binding site" evidence="1">
    <location>
        <position position="332"/>
    </location>
    <ligand>
        <name>pyridoxal 5'-phosphate</name>
        <dbReference type="ChEBI" id="CHEBI:597326"/>
        <note>ligand shared between dimeric partners</note>
    </ligand>
</feature>
<feature type="modified residue" description="N6-(pyridoxal phosphate)lysine" evidence="1">
    <location>
        <position position="300"/>
    </location>
</feature>
<protein>
    <recommendedName>
        <fullName evidence="1">Putrescine aminotransferase</fullName>
        <shortName evidence="1">PAT</shortName>
        <shortName evidence="1">PATase</shortName>
        <ecNumber evidence="1">2.6.1.82</ecNumber>
    </recommendedName>
    <alternativeName>
        <fullName evidence="1">Cadaverine transaminase</fullName>
    </alternativeName>
    <alternativeName>
        <fullName evidence="1">Diamine transaminase</fullName>
        <ecNumber evidence="1">2.6.1.29</ecNumber>
    </alternativeName>
    <alternativeName>
        <fullName evidence="1">Putrescine transaminase</fullName>
    </alternativeName>
    <alternativeName>
        <fullName evidence="1">Putrescine--2-oxoglutaric acid transaminase</fullName>
    </alternativeName>
</protein>
<accession>A7ZRV6</accession>
<proteinExistence type="inferred from homology"/>
<name>PAT_ECO24</name>
<dbReference type="EC" id="2.6.1.82" evidence="1"/>
<dbReference type="EC" id="2.6.1.29" evidence="1"/>
<dbReference type="EMBL" id="CP000800">
    <property type="protein sequence ID" value="ABV20592.1"/>
    <property type="status" value="ALT_INIT"/>
    <property type="molecule type" value="Genomic_DNA"/>
</dbReference>
<dbReference type="SMR" id="A7ZRV6"/>
<dbReference type="KEGG" id="ecw:EcE24377A_3540"/>
<dbReference type="HOGENOM" id="CLU_016922_10_0_6"/>
<dbReference type="UniPathway" id="UPA00188">
    <property type="reaction ID" value="UER00290"/>
</dbReference>
<dbReference type="Proteomes" id="UP000001122">
    <property type="component" value="Chromosome"/>
</dbReference>
<dbReference type="GO" id="GO:0019161">
    <property type="term" value="F:diamine transaminase activity"/>
    <property type="evidence" value="ECO:0007669"/>
    <property type="project" value="UniProtKB-EC"/>
</dbReference>
<dbReference type="GO" id="GO:0042802">
    <property type="term" value="F:identical protein binding"/>
    <property type="evidence" value="ECO:0007669"/>
    <property type="project" value="TreeGrafter"/>
</dbReference>
<dbReference type="GO" id="GO:0033094">
    <property type="term" value="F:putrescine--2-oxoglutarate transaminase activity"/>
    <property type="evidence" value="ECO:0007669"/>
    <property type="project" value="UniProtKB-UniRule"/>
</dbReference>
<dbReference type="GO" id="GO:0030170">
    <property type="term" value="F:pyridoxal phosphate binding"/>
    <property type="evidence" value="ECO:0007669"/>
    <property type="project" value="UniProtKB-UniRule"/>
</dbReference>
<dbReference type="GO" id="GO:0019477">
    <property type="term" value="P:L-lysine catabolic process"/>
    <property type="evidence" value="ECO:0007669"/>
    <property type="project" value="UniProtKB-UniRule"/>
</dbReference>
<dbReference type="GO" id="GO:0009447">
    <property type="term" value="P:putrescine catabolic process"/>
    <property type="evidence" value="ECO:0007669"/>
    <property type="project" value="UniProtKB-UniRule"/>
</dbReference>
<dbReference type="CDD" id="cd00610">
    <property type="entry name" value="OAT_like"/>
    <property type="match status" value="1"/>
</dbReference>
<dbReference type="FunFam" id="3.40.640.10:FF:000004">
    <property type="entry name" value="Acetylornithine aminotransferase"/>
    <property type="match status" value="1"/>
</dbReference>
<dbReference type="Gene3D" id="3.90.1150.10">
    <property type="entry name" value="Aspartate Aminotransferase, domain 1"/>
    <property type="match status" value="1"/>
</dbReference>
<dbReference type="Gene3D" id="3.40.640.10">
    <property type="entry name" value="Type I PLP-dependent aspartate aminotransferase-like (Major domain)"/>
    <property type="match status" value="1"/>
</dbReference>
<dbReference type="HAMAP" id="MF_01276">
    <property type="entry name" value="Putres_aminotrans_3"/>
    <property type="match status" value="1"/>
</dbReference>
<dbReference type="InterPro" id="IPR005814">
    <property type="entry name" value="Aminotrans_3"/>
</dbReference>
<dbReference type="InterPro" id="IPR049704">
    <property type="entry name" value="Aminotrans_3_PPA_site"/>
</dbReference>
<dbReference type="InterPro" id="IPR050103">
    <property type="entry name" value="Class-III_PLP-dep_AT"/>
</dbReference>
<dbReference type="InterPro" id="IPR017747">
    <property type="entry name" value="Putrescine_aminotransferase"/>
</dbReference>
<dbReference type="InterPro" id="IPR015424">
    <property type="entry name" value="PyrdxlP-dep_Trfase"/>
</dbReference>
<dbReference type="InterPro" id="IPR015421">
    <property type="entry name" value="PyrdxlP-dep_Trfase_major"/>
</dbReference>
<dbReference type="InterPro" id="IPR015422">
    <property type="entry name" value="PyrdxlP-dep_Trfase_small"/>
</dbReference>
<dbReference type="NCBIfam" id="NF008570">
    <property type="entry name" value="PRK11522.1"/>
    <property type="match status" value="1"/>
</dbReference>
<dbReference type="NCBIfam" id="TIGR03372">
    <property type="entry name" value="putres_am_tran"/>
    <property type="match status" value="1"/>
</dbReference>
<dbReference type="PANTHER" id="PTHR11986">
    <property type="entry name" value="AMINOTRANSFERASE CLASS III"/>
    <property type="match status" value="1"/>
</dbReference>
<dbReference type="PANTHER" id="PTHR11986:SF112">
    <property type="entry name" value="PUTRESCINE AMINOTRANSFERASE"/>
    <property type="match status" value="1"/>
</dbReference>
<dbReference type="Pfam" id="PF00202">
    <property type="entry name" value="Aminotran_3"/>
    <property type="match status" value="1"/>
</dbReference>
<dbReference type="PIRSF" id="PIRSF000521">
    <property type="entry name" value="Transaminase_4ab_Lys_Orn"/>
    <property type="match status" value="1"/>
</dbReference>
<dbReference type="SUPFAM" id="SSF53383">
    <property type="entry name" value="PLP-dependent transferases"/>
    <property type="match status" value="1"/>
</dbReference>
<dbReference type="PROSITE" id="PS00600">
    <property type="entry name" value="AA_TRANSFER_CLASS_3"/>
    <property type="match status" value="1"/>
</dbReference>
<comment type="function">
    <text evidence="1">Catalyzes the aminotransferase reaction from putrescine to 2-oxoglutarate, leading to glutamate and 4-aminobutanal, which spontaneously cyclizes to form 1-pyrroline. This is the first step in one of two pathways for putrescine degradation, where putrescine is converted into 4-aminobutanoate (gamma-aminobutyrate or GABA) via 4-aminobutanal. Also functions as a cadaverine transaminase in a a L-lysine degradation pathway to succinate that proceeds via cadaverine, glutarate and L-2-hydroxyglutarate.</text>
</comment>
<comment type="catalytic activity">
    <reaction evidence="1">
        <text>an alkane-alpha,omega-diamine + 2-oxoglutarate = an omega-aminoaldehyde + L-glutamate</text>
        <dbReference type="Rhea" id="RHEA:18217"/>
        <dbReference type="Rhea" id="RHEA-COMP:9766"/>
        <dbReference type="Rhea" id="RHEA-COMP:12750"/>
        <dbReference type="ChEBI" id="CHEBI:16810"/>
        <dbReference type="ChEBI" id="CHEBI:29985"/>
        <dbReference type="ChEBI" id="CHEBI:70977"/>
        <dbReference type="ChEBI" id="CHEBI:133427"/>
        <dbReference type="EC" id="2.6.1.29"/>
    </reaction>
    <physiologicalReaction direction="left-to-right" evidence="1">
        <dbReference type="Rhea" id="RHEA:18218"/>
    </physiologicalReaction>
</comment>
<comment type="catalytic activity">
    <reaction evidence="1">
        <text>putrescine + 2-oxoglutarate = 1-pyrroline + L-glutamate + H2O</text>
        <dbReference type="Rhea" id="RHEA:12268"/>
        <dbReference type="ChEBI" id="CHEBI:15377"/>
        <dbReference type="ChEBI" id="CHEBI:16810"/>
        <dbReference type="ChEBI" id="CHEBI:29985"/>
        <dbReference type="ChEBI" id="CHEBI:36781"/>
        <dbReference type="ChEBI" id="CHEBI:326268"/>
        <dbReference type="EC" id="2.6.1.82"/>
    </reaction>
    <physiologicalReaction direction="left-to-right" evidence="1">
        <dbReference type="Rhea" id="RHEA:12269"/>
    </physiologicalReaction>
</comment>
<comment type="catalytic activity">
    <reaction evidence="1">
        <text>cadaverine + 2-oxoglutarate = 5-aminopentanal + L-glutamate</text>
        <dbReference type="Rhea" id="RHEA:61624"/>
        <dbReference type="ChEBI" id="CHEBI:16810"/>
        <dbReference type="ChEBI" id="CHEBI:29985"/>
        <dbReference type="ChEBI" id="CHEBI:58384"/>
        <dbReference type="ChEBI" id="CHEBI:144896"/>
    </reaction>
    <physiologicalReaction direction="left-to-right" evidence="1">
        <dbReference type="Rhea" id="RHEA:61625"/>
    </physiologicalReaction>
</comment>
<comment type="cofactor">
    <cofactor evidence="1">
        <name>pyridoxal 5'-phosphate</name>
        <dbReference type="ChEBI" id="CHEBI:597326"/>
    </cofactor>
</comment>
<comment type="pathway">
    <text evidence="1">Amine and polyamine degradation; putrescine degradation; 4-aminobutanal from putrescine (transaminase route): step 1/1.</text>
</comment>
<comment type="similarity">
    <text evidence="1">Belongs to the class-III pyridoxal-phosphate-dependent aminotransferase family. Putrescine aminotransferase subfamily.</text>
</comment>
<comment type="sequence caution" evidence="2">
    <conflict type="erroneous initiation">
        <sequence resource="EMBL-CDS" id="ABV20592"/>
    </conflict>
</comment>
<evidence type="ECO:0000255" key="1">
    <source>
        <dbReference type="HAMAP-Rule" id="MF_01276"/>
    </source>
</evidence>
<evidence type="ECO:0000305" key="2"/>
<sequence length="459" mass="49631">MNRLPSSASALACSAHALNLIEKRTLDHEEMKALNREVIEYFKEHVNPGFLEYRKSVTAGGDYGAVEWQAGGLNTLVDTQGQEFIDCLGGFGIFNVGHRNPVVVSAVQNQLAKQPLHSQELLDPLRAMLAKTLAALTPGKLKYSFFCNSGTESVEAALKLAKAYQSPRGKFTFIATSGAFHGKSLGALSATAKSTFRKPFMPLLPGFRHVPFGNIEAMRTALNECKKTGDDVAAVILEPIQGEGGVILPPPGYLTAVRKLCDEFGALMILDEVQTGMGRTGKMFACEHENVQPDILCLAKALGGGVMPIGATIATEEVFSVLFDNPFLHTTTFGGNPLACAAALATINVLLEQNLPAQAEQKGDMLLDGFRQLAREYPDLVQEARGKGMLMAIEFVDNEIGYNFASEMFRQRVLVAGTLNNAKTIRIEPPLTLTIEQCELVIKAARKALAAMRVSVEEA</sequence>
<gene>
    <name evidence="1" type="primary">patA</name>
    <name type="ordered locus">EcE24377A_3540</name>
</gene>
<reference key="1">
    <citation type="journal article" date="2008" name="J. Bacteriol.">
        <title>The pangenome structure of Escherichia coli: comparative genomic analysis of E. coli commensal and pathogenic isolates.</title>
        <authorList>
            <person name="Rasko D.A."/>
            <person name="Rosovitz M.J."/>
            <person name="Myers G.S.A."/>
            <person name="Mongodin E.F."/>
            <person name="Fricke W.F."/>
            <person name="Gajer P."/>
            <person name="Crabtree J."/>
            <person name="Sebaihia M."/>
            <person name="Thomson N.R."/>
            <person name="Chaudhuri R."/>
            <person name="Henderson I.R."/>
            <person name="Sperandio V."/>
            <person name="Ravel J."/>
        </authorList>
    </citation>
    <scope>NUCLEOTIDE SEQUENCE [LARGE SCALE GENOMIC DNA]</scope>
    <source>
        <strain>E24377A / ETEC</strain>
    </source>
</reference>
<organism>
    <name type="scientific">Escherichia coli O139:H28 (strain E24377A / ETEC)</name>
    <dbReference type="NCBI Taxonomy" id="331111"/>
    <lineage>
        <taxon>Bacteria</taxon>
        <taxon>Pseudomonadati</taxon>
        <taxon>Pseudomonadota</taxon>
        <taxon>Gammaproteobacteria</taxon>
        <taxon>Enterobacterales</taxon>
        <taxon>Enterobacteriaceae</taxon>
        <taxon>Escherichia</taxon>
    </lineage>
</organism>